<evidence type="ECO:0000250" key="1"/>
<evidence type="ECO:0000255" key="2"/>
<evidence type="ECO:0000255" key="3">
    <source>
        <dbReference type="PROSITE-ProRule" id="PRU01161"/>
    </source>
</evidence>
<evidence type="ECO:0000256" key="4">
    <source>
        <dbReference type="SAM" id="MobiDB-lite"/>
    </source>
</evidence>
<evidence type="ECO:0000305" key="5"/>
<proteinExistence type="inferred from homology"/>
<gene>
    <name type="primary">nte1</name>
    <name type="ORF">NCU08276</name>
</gene>
<dbReference type="EC" id="3.1.1.5"/>
<dbReference type="EMBL" id="CM002239">
    <property type="protein sequence ID" value="EAA32668.3"/>
    <property type="molecule type" value="Genomic_DNA"/>
</dbReference>
<dbReference type="RefSeq" id="XP_961904.3">
    <property type="nucleotide sequence ID" value="XM_956811.3"/>
</dbReference>
<dbReference type="SMR" id="Q7S8J1"/>
<dbReference type="FunCoup" id="Q7S8J1">
    <property type="interactions" value="108"/>
</dbReference>
<dbReference type="STRING" id="367110.Q7S8J1"/>
<dbReference type="PaxDb" id="5141-EFNCRP00000008431"/>
<dbReference type="EnsemblFungi" id="EAA32668">
    <property type="protein sequence ID" value="EAA32668"/>
    <property type="gene ID" value="NCU08276"/>
</dbReference>
<dbReference type="GeneID" id="3878043"/>
<dbReference type="KEGG" id="ncr:NCU08276"/>
<dbReference type="VEuPathDB" id="FungiDB:NCU08276"/>
<dbReference type="HOGENOM" id="CLU_000960_1_1_1"/>
<dbReference type="InParanoid" id="Q7S8J1"/>
<dbReference type="OrthoDB" id="421051at2759"/>
<dbReference type="Proteomes" id="UP000001805">
    <property type="component" value="Chromosome 4, Linkage Group IV"/>
</dbReference>
<dbReference type="GO" id="GO:0005783">
    <property type="term" value="C:endoplasmic reticulum"/>
    <property type="evidence" value="ECO:0000318"/>
    <property type="project" value="GO_Central"/>
</dbReference>
<dbReference type="GO" id="GO:0005789">
    <property type="term" value="C:endoplasmic reticulum membrane"/>
    <property type="evidence" value="ECO:0007669"/>
    <property type="project" value="UniProtKB-SubCell"/>
</dbReference>
<dbReference type="GO" id="GO:0004622">
    <property type="term" value="F:lysophospholipase activity"/>
    <property type="evidence" value="ECO:0000318"/>
    <property type="project" value="GO_Central"/>
</dbReference>
<dbReference type="GO" id="GO:0034638">
    <property type="term" value="P:phosphatidylcholine catabolic process"/>
    <property type="evidence" value="ECO:0007669"/>
    <property type="project" value="EnsemblFungi"/>
</dbReference>
<dbReference type="GO" id="GO:0071071">
    <property type="term" value="P:regulation of phospholipid biosynthetic process"/>
    <property type="evidence" value="ECO:0007669"/>
    <property type="project" value="EnsemblFungi"/>
</dbReference>
<dbReference type="CDD" id="cd00038">
    <property type="entry name" value="CAP_ED"/>
    <property type="match status" value="2"/>
</dbReference>
<dbReference type="FunFam" id="2.60.120.10:FF:000062">
    <property type="entry name" value="Lysophospholipase NTE1"/>
    <property type="match status" value="1"/>
</dbReference>
<dbReference type="FunFam" id="3.40.1090.10:FF:000007">
    <property type="entry name" value="Lysophospholipase NTE1"/>
    <property type="match status" value="1"/>
</dbReference>
<dbReference type="FunFam" id="3.40.1090.10:FF:000018">
    <property type="entry name" value="Lysophospholipase NTE1"/>
    <property type="match status" value="1"/>
</dbReference>
<dbReference type="Gene3D" id="3.40.1090.10">
    <property type="entry name" value="Cytosolic phospholipase A2 catalytic domain"/>
    <property type="match status" value="2"/>
</dbReference>
<dbReference type="Gene3D" id="2.60.120.10">
    <property type="entry name" value="Jelly Rolls"/>
    <property type="match status" value="3"/>
</dbReference>
<dbReference type="InterPro" id="IPR016035">
    <property type="entry name" value="Acyl_Trfase/lysoPLipase"/>
</dbReference>
<dbReference type="InterPro" id="IPR000595">
    <property type="entry name" value="cNMP-bd_dom"/>
</dbReference>
<dbReference type="InterPro" id="IPR018490">
    <property type="entry name" value="cNMP-bd_dom_sf"/>
</dbReference>
<dbReference type="InterPro" id="IPR001423">
    <property type="entry name" value="LysoPLipase_patatin_CS"/>
</dbReference>
<dbReference type="InterPro" id="IPR050301">
    <property type="entry name" value="NTE"/>
</dbReference>
<dbReference type="InterPro" id="IPR056556">
    <property type="entry name" value="NTE1_P-loop_dom"/>
</dbReference>
<dbReference type="InterPro" id="IPR002641">
    <property type="entry name" value="PNPLA_dom"/>
</dbReference>
<dbReference type="InterPro" id="IPR014710">
    <property type="entry name" value="RmlC-like_jellyroll"/>
</dbReference>
<dbReference type="PANTHER" id="PTHR14226:SF29">
    <property type="entry name" value="NEUROPATHY TARGET ESTERASE SWS"/>
    <property type="match status" value="1"/>
</dbReference>
<dbReference type="PANTHER" id="PTHR14226">
    <property type="entry name" value="NEUROPATHY TARGET ESTERASE/SWISS CHEESE D.MELANOGASTER"/>
    <property type="match status" value="1"/>
</dbReference>
<dbReference type="Pfam" id="PF00027">
    <property type="entry name" value="cNMP_binding"/>
    <property type="match status" value="1"/>
</dbReference>
<dbReference type="Pfam" id="PF24179">
    <property type="entry name" value="NTE_Ploop"/>
    <property type="match status" value="1"/>
</dbReference>
<dbReference type="Pfam" id="PF01734">
    <property type="entry name" value="Patatin"/>
    <property type="match status" value="1"/>
</dbReference>
<dbReference type="SMART" id="SM00100">
    <property type="entry name" value="cNMP"/>
    <property type="match status" value="2"/>
</dbReference>
<dbReference type="SUPFAM" id="SSF51206">
    <property type="entry name" value="cAMP-binding domain-like"/>
    <property type="match status" value="3"/>
</dbReference>
<dbReference type="SUPFAM" id="SSF52151">
    <property type="entry name" value="FabD/lysophospholipase-like"/>
    <property type="match status" value="1"/>
</dbReference>
<dbReference type="PROSITE" id="PS50042">
    <property type="entry name" value="CNMP_BINDING_3"/>
    <property type="match status" value="2"/>
</dbReference>
<dbReference type="PROSITE" id="PS51635">
    <property type="entry name" value="PNPLA"/>
    <property type="match status" value="1"/>
</dbReference>
<dbReference type="PROSITE" id="PS01237">
    <property type="entry name" value="UPF0028"/>
    <property type="match status" value="1"/>
</dbReference>
<keyword id="KW-0256">Endoplasmic reticulum</keyword>
<keyword id="KW-0378">Hydrolase</keyword>
<keyword id="KW-0442">Lipid degradation</keyword>
<keyword id="KW-0443">Lipid metabolism</keyword>
<keyword id="KW-0472">Membrane</keyword>
<keyword id="KW-1185">Reference proteome</keyword>
<keyword id="KW-0677">Repeat</keyword>
<keyword id="KW-0812">Transmembrane</keyword>
<keyword id="KW-1133">Transmembrane helix</keyword>
<sequence length="1515" mass="167560">MESLSNLGNAMSSVLSETTSTTATAILADPTEALSSVVALASDAVSKATSDVVPEHTPTSWFTIILWLLHRISSVLYFVIKLTTITTPTFLFNIFSTSLTVTMNATTLVLIMLFMMAGVTWVVRYRYLNMYSRLPPEPQRKEPAVDLFPETQEEGVKSGLASYFDEFLSAIKIFGYLERPVFHELTRSMQTRKLIAGETLNLEEEQGFCLVVDGMVEIFVKSARDGRRSSSGPSFESDDEEGFAPGRQRYQLLTEVRNGAPMSSLFSIMSLFTEDIQMHDTDDDDSPDPTPSAPGTAMPGYPMNANFQQSNDTLPSIPGTPLSDNHVMQRGMASAESLTMSPLAHDSSRIPSLSLVNTRPAVPRRPVPKRLNTTSAHPDIIARATVDTTIAIIPASAFRRLIKIYPKATAHIVHVILSRFQRVTLATAYNYLGLSGEVLQMERNILKHTVRQLPNHLRGDALDRLKEKFKRERERIGEKEVEKGIALHNAHAARRRRSAASLRKEVALQAYSKRRQSIVTATPAFGTRRERPSPDMPSPGDLLTNTQQLKSGPASQLDLARDATSPRPQRNLSPFSTPRNAHVSLDTREALDEDDMFRESVLECMFRAIGLTGNGSVNPDSTQASPRFVPTDQRRSRGGPGHTAFGFMDAFDPFDNDTESVTSCGFSSSSPVPNPQLLAHDMKDEVEIVFFPKGSVLVEQGERNPGLYYVIDGFLDICVPGDDSSHDLLQSSAKVDHGHDSATGADAFGANSSRFPEPNMNNNFGAEQKKGKQGRRSVALIKPGGLAGYVGTISSYRSFIDVVARTDVCVGFLPLASIDRIVDRYPIVMLTMAKRLTELLPRLLLHIDFALEWVQVNSGQVLFREGDESEAIYLVLNGRLRLVEDQKDGGMNVKAEFGQGESIGELEVLTESARTGTLHAIRETELVKFPRTLFNSLAQEHPNITIKISKIIAARMRAFIDDPSRMGLKDNVVRSYKSSSTLNLRTVAILPVTAGVPVVEFGNRLMNALSQVGPPNGATCLNQAAILNHLGKLAFNRMGKLKLSQYLADLEEKYGLVVYVADTNVNTPWTQTCITQADCLLFVGLADSSPEIGEYERFMLGMKSTARKILVLVHQERYSNPGLTRQWLKNRMWINGGHFHVQMAYTSNTVPIHPPTKRFGPSLKQRVQILQAEIQKYTSRKVRHVPFYSPDAPFKGDFHRLARRLCGKSVGLVLGGGGARGIAHVGIIRAMEEAGIPIDMVGGTSIGAFIGGLYARHADVVPIFGLAKKFAGRMASMWRFAFDLTYPSASYTTGHEFNRGIFKTFGKTQIEDFWLEYYCNTTNISKSRVEFHTSGYAWRYIRASMSLAGLLPPLCDEGSMLLDGGYIDNLTVSRMKSLGSDVIFAVDVGSLDDNTPQAFGDSLSGVWAFFNRWNPFSSVPNPPTLAEIQARLAYVSSVGELERAKTMPGCIYMRPPIDDYGTLDFGKFDEIYGVGYKYGQEFLQKLREQGVLPLVEETEAKKALRRTMAPRRASI</sequence>
<organism>
    <name type="scientific">Neurospora crassa (strain ATCC 24698 / 74-OR23-1A / CBS 708.71 / DSM 1257 / FGSC 987)</name>
    <dbReference type="NCBI Taxonomy" id="367110"/>
    <lineage>
        <taxon>Eukaryota</taxon>
        <taxon>Fungi</taxon>
        <taxon>Dikarya</taxon>
        <taxon>Ascomycota</taxon>
        <taxon>Pezizomycotina</taxon>
        <taxon>Sordariomycetes</taxon>
        <taxon>Sordariomycetidae</taxon>
        <taxon>Sordariales</taxon>
        <taxon>Sordariaceae</taxon>
        <taxon>Neurospora</taxon>
    </lineage>
</organism>
<reference key="1">
    <citation type="journal article" date="2003" name="Nature">
        <title>The genome sequence of the filamentous fungus Neurospora crassa.</title>
        <authorList>
            <person name="Galagan J.E."/>
            <person name="Calvo S.E."/>
            <person name="Borkovich K.A."/>
            <person name="Selker E.U."/>
            <person name="Read N.D."/>
            <person name="Jaffe D.B."/>
            <person name="FitzHugh W."/>
            <person name="Ma L.-J."/>
            <person name="Smirnov S."/>
            <person name="Purcell S."/>
            <person name="Rehman B."/>
            <person name="Elkins T."/>
            <person name="Engels R."/>
            <person name="Wang S."/>
            <person name="Nielsen C.B."/>
            <person name="Butler J."/>
            <person name="Endrizzi M."/>
            <person name="Qui D."/>
            <person name="Ianakiev P."/>
            <person name="Bell-Pedersen D."/>
            <person name="Nelson M.A."/>
            <person name="Werner-Washburne M."/>
            <person name="Selitrennikoff C.P."/>
            <person name="Kinsey J.A."/>
            <person name="Braun E.L."/>
            <person name="Zelter A."/>
            <person name="Schulte U."/>
            <person name="Kothe G.O."/>
            <person name="Jedd G."/>
            <person name="Mewes H.-W."/>
            <person name="Staben C."/>
            <person name="Marcotte E."/>
            <person name="Greenberg D."/>
            <person name="Roy A."/>
            <person name="Foley K."/>
            <person name="Naylor J."/>
            <person name="Stange-Thomann N."/>
            <person name="Barrett R."/>
            <person name="Gnerre S."/>
            <person name="Kamal M."/>
            <person name="Kamvysselis M."/>
            <person name="Mauceli E.W."/>
            <person name="Bielke C."/>
            <person name="Rudd S."/>
            <person name="Frishman D."/>
            <person name="Krystofova S."/>
            <person name="Rasmussen C."/>
            <person name="Metzenberg R.L."/>
            <person name="Perkins D.D."/>
            <person name="Kroken S."/>
            <person name="Cogoni C."/>
            <person name="Macino G."/>
            <person name="Catcheside D.E.A."/>
            <person name="Li W."/>
            <person name="Pratt R.J."/>
            <person name="Osmani S.A."/>
            <person name="DeSouza C.P.C."/>
            <person name="Glass N.L."/>
            <person name="Orbach M.J."/>
            <person name="Berglund J.A."/>
            <person name="Voelker R."/>
            <person name="Yarden O."/>
            <person name="Plamann M."/>
            <person name="Seiler S."/>
            <person name="Dunlap J.C."/>
            <person name="Radford A."/>
            <person name="Aramayo R."/>
            <person name="Natvig D.O."/>
            <person name="Alex L.A."/>
            <person name="Mannhaupt G."/>
            <person name="Ebbole D.J."/>
            <person name="Freitag M."/>
            <person name="Paulsen I."/>
            <person name="Sachs M.S."/>
            <person name="Lander E.S."/>
            <person name="Nusbaum C."/>
            <person name="Birren B.W."/>
        </authorList>
    </citation>
    <scope>NUCLEOTIDE SEQUENCE [LARGE SCALE GENOMIC DNA]</scope>
    <source>
        <strain>ATCC 24698 / 74-OR23-1A / CBS 708.71 / DSM 1257 / FGSC 987</strain>
    </source>
</reference>
<comment type="function">
    <text evidence="1">Intracellular phospholipase B that catalyzes the double deacylation of phosphatidylcholine (PC) to glycerophosphocholine (GroPCho). Plays an important role in membrane lipid homeostasis. Responsible for the rapid PC turnover in response to inositol, elevated temperatures, or when choline is present in the growth medium (By similarity).</text>
</comment>
<comment type="catalytic activity">
    <reaction>
        <text>a 1-acyl-sn-glycero-3-phosphocholine + H2O = sn-glycerol 3-phosphocholine + a fatty acid + H(+)</text>
        <dbReference type="Rhea" id="RHEA:15177"/>
        <dbReference type="ChEBI" id="CHEBI:15377"/>
        <dbReference type="ChEBI" id="CHEBI:15378"/>
        <dbReference type="ChEBI" id="CHEBI:16870"/>
        <dbReference type="ChEBI" id="CHEBI:28868"/>
        <dbReference type="ChEBI" id="CHEBI:58168"/>
        <dbReference type="EC" id="3.1.1.5"/>
    </reaction>
</comment>
<comment type="activity regulation">
    <text evidence="1">Inhibited by organophosphorus esters.</text>
</comment>
<comment type="subcellular location">
    <subcellularLocation>
        <location evidence="1">Endoplasmic reticulum membrane</location>
        <topology evidence="1">Multi-pass membrane protein</topology>
    </subcellularLocation>
</comment>
<comment type="similarity">
    <text evidence="5">Belongs to the NTE family.</text>
</comment>
<name>NTE1_NEUCR</name>
<protein>
    <recommendedName>
        <fullName>Lysophospholipase nte1</fullName>
        <ecNumber>3.1.1.5</ecNumber>
    </recommendedName>
    <alternativeName>
        <fullName>Intracellular phospholipase B</fullName>
    </alternativeName>
    <alternativeName>
        <fullName>Neuropathy target esterase homolog</fullName>
    </alternativeName>
</protein>
<feature type="chain" id="PRO_0000295326" description="Lysophospholipase nte1">
    <location>
        <begin position="1"/>
        <end position="1515"/>
    </location>
</feature>
<feature type="topological domain" description="Cytoplasmic" evidence="1">
    <location>
        <begin position="1"/>
        <end position="59"/>
    </location>
</feature>
<feature type="transmembrane region" description="Helical" evidence="2">
    <location>
        <begin position="60"/>
        <end position="80"/>
    </location>
</feature>
<feature type="topological domain" description="Lumenal" evidence="1">
    <location>
        <begin position="81"/>
        <end position="102"/>
    </location>
</feature>
<feature type="transmembrane region" description="Helical" evidence="2">
    <location>
        <begin position="103"/>
        <end position="123"/>
    </location>
</feature>
<feature type="topological domain" description="Cytoplasmic" evidence="1">
    <location>
        <begin position="124"/>
        <end position="1515"/>
    </location>
</feature>
<feature type="domain" description="PNPLA" evidence="3">
    <location>
        <begin position="1212"/>
        <end position="1376"/>
    </location>
</feature>
<feature type="region of interest" description="Disordered" evidence="4">
    <location>
        <begin position="278"/>
        <end position="303"/>
    </location>
</feature>
<feature type="region of interest" description="Disordered" evidence="4">
    <location>
        <begin position="519"/>
        <end position="580"/>
    </location>
</feature>
<feature type="region of interest" description="Disordered" evidence="4">
    <location>
        <begin position="617"/>
        <end position="639"/>
    </location>
</feature>
<feature type="short sequence motif" description="GXGXXG" evidence="3">
    <location>
        <begin position="1216"/>
        <end position="1221"/>
    </location>
</feature>
<feature type="short sequence motif" description="GXSXG" evidence="3">
    <location>
        <begin position="1243"/>
        <end position="1247"/>
    </location>
</feature>
<feature type="short sequence motif" description="DGA/G" evidence="3">
    <location>
        <begin position="1363"/>
        <end position="1365"/>
    </location>
</feature>
<feature type="compositionally biased region" description="Polar residues" evidence="4">
    <location>
        <begin position="543"/>
        <end position="554"/>
    </location>
</feature>
<feature type="compositionally biased region" description="Polar residues" evidence="4">
    <location>
        <begin position="566"/>
        <end position="579"/>
    </location>
</feature>
<feature type="active site" description="Nucleophile" evidence="3">
    <location>
        <position position="1245"/>
    </location>
</feature>
<feature type="active site" description="Proton acceptor" evidence="3">
    <location>
        <position position="1363"/>
    </location>
</feature>
<feature type="binding site">
    <location>
        <begin position="670"/>
        <end position="789"/>
    </location>
    <ligand>
        <name>a nucleoside 3',5'-cyclic phosphate</name>
        <dbReference type="ChEBI" id="CHEBI:58464"/>
        <label>1</label>
    </ligand>
</feature>
<feature type="binding site">
    <location>
        <begin position="835"/>
        <end position="955"/>
    </location>
    <ligand>
        <name>a nucleoside 3',5'-cyclic phosphate</name>
        <dbReference type="ChEBI" id="CHEBI:58464"/>
        <label>2</label>
    </ligand>
</feature>
<accession>Q7S8J1</accession>